<sequence>MIMAAGSTGERPFFEIITSIRYWIIHAVTLPAIFIAGFLFVYTGLAYDAFGTPRPDSYFQASESKAPVVTQRYDAKSQLDLRTK</sequence>
<evidence type="ECO:0000255" key="1">
    <source>
        <dbReference type="HAMAP-Rule" id="MF_00642"/>
    </source>
</evidence>
<evidence type="ECO:0000305" key="2"/>
<accession>Q7V300</accession>
<protein>
    <recommendedName>
        <fullName evidence="1">Cytochrome b559 subunit alpha</fullName>
    </recommendedName>
    <alternativeName>
        <fullName evidence="1">PSII reaction center subunit V</fullName>
    </alternativeName>
</protein>
<proteinExistence type="inferred from homology"/>
<feature type="chain" id="PRO_0000233219" description="Cytochrome b559 subunit alpha">
    <location>
        <begin position="1"/>
        <end position="84"/>
    </location>
</feature>
<feature type="transmembrane region" description="Helical" evidence="1">
    <location>
        <begin position="24"/>
        <end position="38"/>
    </location>
</feature>
<feature type="binding site" description="axial binding residue" evidence="1">
    <location>
        <position position="26"/>
    </location>
    <ligand>
        <name>heme</name>
        <dbReference type="ChEBI" id="CHEBI:30413"/>
        <note>ligand shared with beta subunit</note>
    </ligand>
    <ligandPart>
        <name>Fe</name>
        <dbReference type="ChEBI" id="CHEBI:18248"/>
    </ligandPart>
</feature>
<name>PSBE_PROMP</name>
<keyword id="KW-0249">Electron transport</keyword>
<keyword id="KW-0349">Heme</keyword>
<keyword id="KW-0408">Iron</keyword>
<keyword id="KW-0472">Membrane</keyword>
<keyword id="KW-0479">Metal-binding</keyword>
<keyword id="KW-0602">Photosynthesis</keyword>
<keyword id="KW-0604">Photosystem II</keyword>
<keyword id="KW-0793">Thylakoid</keyword>
<keyword id="KW-0812">Transmembrane</keyword>
<keyword id="KW-1133">Transmembrane helix</keyword>
<keyword id="KW-0813">Transport</keyword>
<gene>
    <name evidence="1" type="primary">psbE</name>
    <name type="ordered locus">PMM0297</name>
</gene>
<dbReference type="EMBL" id="BX548174">
    <property type="protein sequence ID" value="CAE18756.1"/>
    <property type="molecule type" value="Genomic_DNA"/>
</dbReference>
<dbReference type="SMR" id="Q7V300"/>
<dbReference type="STRING" id="59919.PMM0297"/>
<dbReference type="KEGG" id="pmm:PMM0297"/>
<dbReference type="eggNOG" id="ENOG5032RR6">
    <property type="taxonomic scope" value="Bacteria"/>
</dbReference>
<dbReference type="HOGENOM" id="CLU_194095_0_0_3"/>
<dbReference type="Proteomes" id="UP000001026">
    <property type="component" value="Chromosome"/>
</dbReference>
<dbReference type="GO" id="GO:0009523">
    <property type="term" value="C:photosystem II"/>
    <property type="evidence" value="ECO:0007669"/>
    <property type="project" value="UniProtKB-KW"/>
</dbReference>
<dbReference type="GO" id="GO:0031676">
    <property type="term" value="C:plasma membrane-derived thylakoid membrane"/>
    <property type="evidence" value="ECO:0007669"/>
    <property type="project" value="UniProtKB-SubCell"/>
</dbReference>
<dbReference type="GO" id="GO:0009055">
    <property type="term" value="F:electron transfer activity"/>
    <property type="evidence" value="ECO:0007669"/>
    <property type="project" value="UniProtKB-UniRule"/>
</dbReference>
<dbReference type="GO" id="GO:0020037">
    <property type="term" value="F:heme binding"/>
    <property type="evidence" value="ECO:0007669"/>
    <property type="project" value="InterPro"/>
</dbReference>
<dbReference type="GO" id="GO:0005506">
    <property type="term" value="F:iron ion binding"/>
    <property type="evidence" value="ECO:0007669"/>
    <property type="project" value="UniProtKB-UniRule"/>
</dbReference>
<dbReference type="GO" id="GO:0009767">
    <property type="term" value="P:photosynthetic electron transport chain"/>
    <property type="evidence" value="ECO:0007669"/>
    <property type="project" value="InterPro"/>
</dbReference>
<dbReference type="Gene3D" id="1.20.5.860">
    <property type="entry name" value="Photosystem II cytochrome b559, alpha subunit"/>
    <property type="match status" value="1"/>
</dbReference>
<dbReference type="HAMAP" id="MF_00642">
    <property type="entry name" value="PSII_PsbE"/>
    <property type="match status" value="1"/>
</dbReference>
<dbReference type="InterPro" id="IPR006217">
    <property type="entry name" value="PSII_cyt_b559_asu"/>
</dbReference>
<dbReference type="InterPro" id="IPR037025">
    <property type="entry name" value="PSII_cyt_b559_asu_sf"/>
</dbReference>
<dbReference type="InterPro" id="IPR013081">
    <property type="entry name" value="PSII_cyt_b559_N"/>
</dbReference>
<dbReference type="InterPro" id="IPR013082">
    <property type="entry name" value="PSII_cytb559_asu_lum"/>
</dbReference>
<dbReference type="NCBIfam" id="TIGR01332">
    <property type="entry name" value="cyt_b559_alpha"/>
    <property type="match status" value="1"/>
</dbReference>
<dbReference type="PANTHER" id="PTHR33391">
    <property type="entry name" value="CYTOCHROME B559 SUBUNIT BETA-RELATED"/>
    <property type="match status" value="1"/>
</dbReference>
<dbReference type="PANTHER" id="PTHR33391:SF9">
    <property type="entry name" value="CYTOCHROME B559 SUBUNIT BETA-RELATED"/>
    <property type="match status" value="1"/>
</dbReference>
<dbReference type="Pfam" id="PF00283">
    <property type="entry name" value="Cytochrom_B559"/>
    <property type="match status" value="1"/>
</dbReference>
<dbReference type="Pfam" id="PF00284">
    <property type="entry name" value="Cytochrom_B559a"/>
    <property type="match status" value="1"/>
</dbReference>
<dbReference type="PIRSF" id="PIRSF000036">
    <property type="entry name" value="PsbE"/>
    <property type="match status" value="1"/>
</dbReference>
<dbReference type="SUPFAM" id="SSF161045">
    <property type="entry name" value="Cytochrome b559 subunits"/>
    <property type="match status" value="1"/>
</dbReference>
<comment type="function">
    <text evidence="1">This b-type cytochrome is tightly associated with the reaction center of photosystem II (PSII). PSII is a light-driven water:plastoquinone oxidoreductase that uses light energy to abstract electrons from H(2)O, generating O(2) and a proton gradient subsequently used for ATP formation. It consists of a core antenna complex that captures photons, and an electron transfer chain that converts photonic excitation into a charge separation.</text>
</comment>
<comment type="cofactor">
    <cofactor evidence="1">
        <name>heme b</name>
        <dbReference type="ChEBI" id="CHEBI:60344"/>
    </cofactor>
    <text evidence="1">With its partner (PsbF) binds heme. PSII binds additional chlorophylls, carotenoids and specific lipids.</text>
</comment>
<comment type="subunit">
    <text evidence="2">Heterodimer of an alpha subunit and a beta subunit. PSII is composed of 1 copy each of membrane proteins PsbA, PsbB, PsbC, PsbD, PsbE, PsbF, PsbH, PsbI, PsbJ, PsbK, PsbL, PsbM, PsbT, PsbX, PsbY, Psb30/Ycf12, peripheral proteins PsbO, CyanoQ (PsbQ), PsbU, PsbV and a large number of cofactors. It forms dimeric complexes.</text>
</comment>
<comment type="subcellular location">
    <subcellularLocation>
        <location evidence="1">Cellular thylakoid membrane</location>
        <topology evidence="1">Single-pass membrane protein</topology>
    </subcellularLocation>
</comment>
<comment type="similarity">
    <text evidence="1">Belongs to the PsbE/PsbF family.</text>
</comment>
<organism>
    <name type="scientific">Prochlorococcus marinus subsp. pastoris (strain CCMP1986 / NIES-2087 / MED4)</name>
    <dbReference type="NCBI Taxonomy" id="59919"/>
    <lineage>
        <taxon>Bacteria</taxon>
        <taxon>Bacillati</taxon>
        <taxon>Cyanobacteriota</taxon>
        <taxon>Cyanophyceae</taxon>
        <taxon>Synechococcales</taxon>
        <taxon>Prochlorococcaceae</taxon>
        <taxon>Prochlorococcus</taxon>
    </lineage>
</organism>
<reference key="1">
    <citation type="journal article" date="2003" name="Nature">
        <title>Genome divergence in two Prochlorococcus ecotypes reflects oceanic niche differentiation.</title>
        <authorList>
            <person name="Rocap G."/>
            <person name="Larimer F.W."/>
            <person name="Lamerdin J.E."/>
            <person name="Malfatti S."/>
            <person name="Chain P."/>
            <person name="Ahlgren N.A."/>
            <person name="Arellano A."/>
            <person name="Coleman M."/>
            <person name="Hauser L."/>
            <person name="Hess W.R."/>
            <person name="Johnson Z.I."/>
            <person name="Land M.L."/>
            <person name="Lindell D."/>
            <person name="Post A.F."/>
            <person name="Regala W."/>
            <person name="Shah M."/>
            <person name="Shaw S.L."/>
            <person name="Steglich C."/>
            <person name="Sullivan M.B."/>
            <person name="Ting C.S."/>
            <person name="Tolonen A."/>
            <person name="Webb E.A."/>
            <person name="Zinser E.R."/>
            <person name="Chisholm S.W."/>
        </authorList>
    </citation>
    <scope>NUCLEOTIDE SEQUENCE [LARGE SCALE GENOMIC DNA]</scope>
    <source>
        <strain>CCMP1986 / NIES-2087 / MED4</strain>
    </source>
</reference>